<evidence type="ECO:0000250" key="1">
    <source>
        <dbReference type="UniProtKB" id="P29001"/>
    </source>
</evidence>
<evidence type="ECO:0000250" key="2">
    <source>
        <dbReference type="UniProtKB" id="P80065"/>
    </source>
</evidence>
<evidence type="ECO:0000250" key="3">
    <source>
        <dbReference type="UniProtKB" id="Q39041"/>
    </source>
</evidence>
<evidence type="ECO:0000250" key="4">
    <source>
        <dbReference type="UniProtKB" id="Q43866"/>
    </source>
</evidence>
<evidence type="ECO:0000255" key="5"/>
<evidence type="ECO:0000255" key="6">
    <source>
        <dbReference type="PROSITE-ProRule" id="PRU00498"/>
    </source>
</evidence>
<evidence type="ECO:0000255" key="7">
    <source>
        <dbReference type="PROSITE-ProRule" id="PRU10067"/>
    </source>
</evidence>
<evidence type="ECO:0000256" key="8">
    <source>
        <dbReference type="SAM" id="MobiDB-lite"/>
    </source>
</evidence>
<evidence type="ECO:0000305" key="9"/>
<keyword id="KW-1015">Disulfide bond</keyword>
<keyword id="KW-0325">Glycoprotein</keyword>
<keyword id="KW-0326">Glycosidase</keyword>
<keyword id="KW-0378">Hydrolase</keyword>
<keyword id="KW-0472">Membrane</keyword>
<keyword id="KW-1185">Reference proteome</keyword>
<keyword id="KW-0735">Signal-anchor</keyword>
<keyword id="KW-0812">Transmembrane</keyword>
<keyword id="KW-1133">Transmembrane helix</keyword>
<keyword id="KW-0926">Vacuole</keyword>
<keyword id="KW-0865">Zymogen</keyword>
<accession>P49175</accession>
<feature type="propeptide" id="PRO_0000033377" description="Removed in mature form" evidence="2">
    <location>
        <begin position="1"/>
        <end position="112"/>
    </location>
</feature>
<feature type="chain" id="PRO_0000033378" description="Beta-fructofuranosidase 1">
    <location>
        <begin position="113"/>
        <end position="670"/>
    </location>
</feature>
<feature type="topological domain" description="Cytoplasmic" evidence="9">
    <location>
        <begin position="1"/>
        <end position="44"/>
    </location>
</feature>
<feature type="transmembrane region" description="Helical; Signal-anchor for type II membrane protein" evidence="5">
    <location>
        <begin position="45"/>
        <end position="65"/>
    </location>
</feature>
<feature type="topological domain" description="Lumenal" evidence="9">
    <location>
        <begin position="66"/>
        <end position="670"/>
    </location>
</feature>
<feature type="region of interest" description="Disordered" evidence="8">
    <location>
        <begin position="1"/>
        <end position="40"/>
    </location>
</feature>
<feature type="active site" evidence="7">
    <location>
        <position position="139"/>
    </location>
</feature>
<feature type="binding site" evidence="4">
    <location>
        <begin position="136"/>
        <end position="139"/>
    </location>
    <ligand>
        <name>substrate</name>
    </ligand>
</feature>
<feature type="binding site" evidence="4">
    <location>
        <position position="155"/>
    </location>
    <ligand>
        <name>substrate</name>
    </ligand>
</feature>
<feature type="binding site" evidence="4">
    <location>
        <position position="163"/>
    </location>
    <ligand>
        <name>substrate</name>
    </ligand>
</feature>
<feature type="binding site" evidence="4">
    <location>
        <begin position="198"/>
        <end position="199"/>
    </location>
    <ligand>
        <name>substrate</name>
    </ligand>
</feature>
<feature type="binding site" evidence="4">
    <location>
        <begin position="263"/>
        <end position="264"/>
    </location>
    <ligand>
        <name>substrate</name>
    </ligand>
</feature>
<feature type="binding site" evidence="4">
    <location>
        <position position="322"/>
    </location>
    <ligand>
        <name>substrate</name>
    </ligand>
</feature>
<feature type="binding site" evidence="4">
    <location>
        <position position="362"/>
    </location>
    <ligand>
        <name>substrate</name>
    </ligand>
</feature>
<feature type="glycosylation site" description="N-linked (GlcNAc...) asparagine" evidence="6">
    <location>
        <position position="165"/>
    </location>
</feature>
<feature type="glycosylation site" description="N-linked (GlcNAc...) asparagine" evidence="6">
    <location>
        <position position="275"/>
    </location>
</feature>
<feature type="glycosylation site" description="N-linked (GlcNAc...) asparagine" evidence="6">
    <location>
        <position position="518"/>
    </location>
</feature>
<feature type="glycosylation site" description="N-linked (GlcNAc...) asparagine" evidence="6">
    <location>
        <position position="595"/>
    </location>
</feature>
<feature type="glycosylation site" description="N-linked (GlcNAc...) asparagine" evidence="6">
    <location>
        <position position="639"/>
    </location>
</feature>
<feature type="disulfide bond" evidence="4">
    <location>
        <begin position="519"/>
        <end position="567"/>
    </location>
</feature>
<reference key="1">
    <citation type="journal article" date="1995" name="Plant Physiol.">
        <title>The Ivr 1 gene for invertase in maize.</title>
        <authorList>
            <person name="Xu J."/>
            <person name="Pemberton G.H."/>
            <person name="Almira E.C."/>
            <person name="McCarty D.R."/>
            <person name="Koch K.E."/>
        </authorList>
    </citation>
    <scope>NUCLEOTIDE SEQUENCE [GENOMIC DNA]</scope>
    <source>
        <strain>cv. B73</strain>
    </source>
</reference>
<gene>
    <name type="primary">IVR1</name>
</gene>
<proteinExistence type="inferred from homology"/>
<dbReference type="EC" id="3.2.1.26"/>
<dbReference type="EMBL" id="U16123">
    <property type="protein sequence ID" value="AAA83439.1"/>
    <property type="molecule type" value="Genomic_DNA"/>
</dbReference>
<dbReference type="PIR" id="T02092">
    <property type="entry name" value="T02092"/>
</dbReference>
<dbReference type="SMR" id="P49175"/>
<dbReference type="FunCoup" id="P49175">
    <property type="interactions" value="423"/>
</dbReference>
<dbReference type="STRING" id="4577.P49175"/>
<dbReference type="CAZy" id="GH32">
    <property type="family name" value="Glycoside Hydrolase Family 32"/>
</dbReference>
<dbReference type="GlyCosmos" id="P49175">
    <property type="glycosylation" value="5 sites, No reported glycans"/>
</dbReference>
<dbReference type="PaxDb" id="4577-GRMZM2G394450_P01"/>
<dbReference type="MaizeGDB" id="86037"/>
<dbReference type="eggNOG" id="KOG0228">
    <property type="taxonomic scope" value="Eukaryota"/>
</dbReference>
<dbReference type="InParanoid" id="P49175"/>
<dbReference type="BRENDA" id="3.2.1.26">
    <property type="organism ID" value="6752"/>
</dbReference>
<dbReference type="UniPathway" id="UPA00238"/>
<dbReference type="Proteomes" id="UP000007305">
    <property type="component" value="Unplaced"/>
</dbReference>
<dbReference type="ExpressionAtlas" id="P49175">
    <property type="expression patterns" value="baseline and differential"/>
</dbReference>
<dbReference type="GO" id="GO:0016020">
    <property type="term" value="C:membrane"/>
    <property type="evidence" value="ECO:0007669"/>
    <property type="project" value="UniProtKB-SubCell"/>
</dbReference>
<dbReference type="GO" id="GO:0005775">
    <property type="term" value="C:vacuolar lumen"/>
    <property type="evidence" value="ECO:0007669"/>
    <property type="project" value="UniProtKB-SubCell"/>
</dbReference>
<dbReference type="GO" id="GO:0004564">
    <property type="term" value="F:beta-fructofuranosidase activity"/>
    <property type="evidence" value="ECO:0007669"/>
    <property type="project" value="UniProtKB-EC"/>
</dbReference>
<dbReference type="GO" id="GO:0005985">
    <property type="term" value="P:sucrose metabolic process"/>
    <property type="evidence" value="ECO:0007669"/>
    <property type="project" value="UniProtKB-UniPathway"/>
</dbReference>
<dbReference type="CDD" id="cd18624">
    <property type="entry name" value="GH32_Fruct1-like"/>
    <property type="match status" value="1"/>
</dbReference>
<dbReference type="FunFam" id="2.115.10.20:FF:000001">
    <property type="entry name" value="Beta-fructofuranosidase, insoluble isoenzyme CWINV1"/>
    <property type="match status" value="1"/>
</dbReference>
<dbReference type="FunFam" id="2.60.120.560:FF:000002">
    <property type="entry name" value="Beta-fructofuranosidase, insoluble isoenzyme CWINV1"/>
    <property type="match status" value="1"/>
</dbReference>
<dbReference type="Gene3D" id="2.60.120.560">
    <property type="entry name" value="Exo-inulinase, domain 1"/>
    <property type="match status" value="1"/>
</dbReference>
<dbReference type="Gene3D" id="2.115.10.20">
    <property type="entry name" value="Glycosyl hydrolase domain, family 43"/>
    <property type="match status" value="1"/>
</dbReference>
<dbReference type="InterPro" id="IPR021792">
    <property type="entry name" value="Beta-fructofuranosidase_N"/>
</dbReference>
<dbReference type="InterPro" id="IPR013320">
    <property type="entry name" value="ConA-like_dom_sf"/>
</dbReference>
<dbReference type="InterPro" id="IPR050551">
    <property type="entry name" value="Fructan_Metab_Enzymes"/>
</dbReference>
<dbReference type="InterPro" id="IPR001362">
    <property type="entry name" value="Glyco_hydro_32"/>
</dbReference>
<dbReference type="InterPro" id="IPR018053">
    <property type="entry name" value="Glyco_hydro_32_AS"/>
</dbReference>
<dbReference type="InterPro" id="IPR013189">
    <property type="entry name" value="Glyco_hydro_32_C"/>
</dbReference>
<dbReference type="InterPro" id="IPR013148">
    <property type="entry name" value="Glyco_hydro_32_N"/>
</dbReference>
<dbReference type="InterPro" id="IPR023296">
    <property type="entry name" value="Glyco_hydro_beta-prop_sf"/>
</dbReference>
<dbReference type="PANTHER" id="PTHR31953">
    <property type="entry name" value="BETA-FRUCTOFURANOSIDASE, INSOLUBLE ISOENZYME CWINV1-RELATED"/>
    <property type="match status" value="1"/>
</dbReference>
<dbReference type="Pfam" id="PF08244">
    <property type="entry name" value="Glyco_hydro_32C"/>
    <property type="match status" value="1"/>
</dbReference>
<dbReference type="Pfam" id="PF00251">
    <property type="entry name" value="Glyco_hydro_32N"/>
    <property type="match status" value="1"/>
</dbReference>
<dbReference type="Pfam" id="PF11837">
    <property type="entry name" value="INV_N"/>
    <property type="match status" value="1"/>
</dbReference>
<dbReference type="SMART" id="SM00640">
    <property type="entry name" value="Glyco_32"/>
    <property type="match status" value="1"/>
</dbReference>
<dbReference type="SUPFAM" id="SSF75005">
    <property type="entry name" value="Arabinanase/levansucrase/invertase"/>
    <property type="match status" value="1"/>
</dbReference>
<dbReference type="SUPFAM" id="SSF49899">
    <property type="entry name" value="Concanavalin A-like lectins/glucanases"/>
    <property type="match status" value="1"/>
</dbReference>
<dbReference type="PROSITE" id="PS00609">
    <property type="entry name" value="GLYCOSYL_HYDROL_F32"/>
    <property type="match status" value="1"/>
</dbReference>
<comment type="catalytic activity">
    <reaction evidence="7">
        <text>Hydrolysis of terminal non-reducing beta-D-fructofuranoside residues in beta-D-fructofuranosides.</text>
        <dbReference type="EC" id="3.2.1.26"/>
    </reaction>
</comment>
<comment type="pathway">
    <text evidence="9">Glycan biosynthesis; sucrose metabolism.</text>
</comment>
<comment type="subunit">
    <text evidence="1">May be present in two forms, a 70 kDa monomer and a heterodimer of the 30 kDa and 38 kDa subunits. The ratio of the levels of the two forms within cells appears to be regulated developmentally (By similarity).</text>
</comment>
<comment type="subcellular location">
    <subcellularLocation>
        <location evidence="5">Membrane</location>
        <topology evidence="5">Single-pass type II membrane protein</topology>
    </subcellularLocation>
    <subcellularLocation>
        <location evidence="3">Vacuole lumen</location>
    </subcellularLocation>
    <text evidence="3">May be released into the lumen of the vacuole from the tonoplast through a proteolytic processing.</text>
</comment>
<comment type="similarity">
    <text evidence="9">Belongs to the glycosyl hydrolase 32 family.</text>
</comment>
<name>INV1_MAIZE</name>
<protein>
    <recommendedName>
        <fullName>Beta-fructofuranosidase 1</fullName>
        <ecNumber>3.2.1.26</ecNumber>
    </recommendedName>
    <alternativeName>
        <fullName>Invertase 1</fullName>
    </alternativeName>
    <alternativeName>
        <fullName>Sucrose 1</fullName>
    </alternativeName>
</protein>
<organism>
    <name type="scientific">Zea mays</name>
    <name type="common">Maize</name>
    <dbReference type="NCBI Taxonomy" id="4577"/>
    <lineage>
        <taxon>Eukaryota</taxon>
        <taxon>Viridiplantae</taxon>
        <taxon>Streptophyta</taxon>
        <taxon>Embryophyta</taxon>
        <taxon>Tracheophyta</taxon>
        <taxon>Spermatophyta</taxon>
        <taxon>Magnoliopsida</taxon>
        <taxon>Liliopsida</taxon>
        <taxon>Poales</taxon>
        <taxon>Poaceae</taxon>
        <taxon>PACMAD clade</taxon>
        <taxon>Panicoideae</taxon>
        <taxon>Andropogonodae</taxon>
        <taxon>Andropogoneae</taxon>
        <taxon>Tripsacinae</taxon>
        <taxon>Zea</taxon>
    </lineage>
</organism>
<sequence length="670" mass="71933">MIPAVADPTTLDGGGARRPLLPETDPRGRAAAGAEQKRPPATPTVLTAVVSAVLLLVLVAVTVLASQHVDGQAGGVPAGEDAVVVEVAASRGVAEGVSEKSTAPLLGSGALQDFSWTNAMLAWQRTAFHFQPPKNWMNDPNGPLYHKGWYHLFYQWNPDSAVWGNITWGHAVSRDLLHWLHLPLAMVPDHPYDANGVWSGSATRLPDGRIVMLYTGSTAESSAQVQNLAEPADASDPLLREWVKSDANPVLVPPPGIGPTDFRDPTTACRTPAGNDTAWRVAIGSKDRDHAGLALVYRTEDFVRYDPAPALMHAVPGTGMWECVDFYPVAAGSGAAAGSGDGLETSAAPGPGVKHVLKASLDDDKHDYYAIGTYDPATDTWTPDSAEDDVGIGLRYDYGKYYASKTFYDPVLRRRVLWGWVGETDSERADILKGWASVQSIPRTVLLDTKTGSNLLQWPVVEVENLRMSGKSFDGVALDRGSVVPLDVGKATQLDIEAVFEVDASDAAGVTEADVTFNCSTSAGAAGRGLLGPFGLLVLADDDLSEQTAVYFYLLKGTDGSLQTFFCQDELRASKANDLVKRVYGSLVPVLDGENLSVRILVDHSIVESFAQGGRTCITSRVYPTRAIYDSARVFLFNNATHAHVKAKSVKIWQLNSAYIRPYPATTTSL</sequence>